<comment type="function">
    <text evidence="1">Catalyzes the reversible conversion of 2-phosphoglycerate (2-PG) into phosphoenolpyruvate (PEP). It is essential for the degradation of carbohydrates via glycolysis.</text>
</comment>
<comment type="catalytic activity">
    <reaction evidence="1">
        <text>(2R)-2-phosphoglycerate = phosphoenolpyruvate + H2O</text>
        <dbReference type="Rhea" id="RHEA:10164"/>
        <dbReference type="ChEBI" id="CHEBI:15377"/>
        <dbReference type="ChEBI" id="CHEBI:58289"/>
        <dbReference type="ChEBI" id="CHEBI:58702"/>
        <dbReference type="EC" id="4.2.1.11"/>
    </reaction>
</comment>
<comment type="cofactor">
    <cofactor evidence="1">
        <name>Mg(2+)</name>
        <dbReference type="ChEBI" id="CHEBI:18420"/>
    </cofactor>
    <text evidence="1">Binds a second Mg(2+) ion via substrate during catalysis.</text>
</comment>
<comment type="pathway">
    <text evidence="1">Carbohydrate degradation; glycolysis; pyruvate from D-glyceraldehyde 3-phosphate: step 4/5.</text>
</comment>
<comment type="subunit">
    <text evidence="1">Component of the RNA degradosome, a multiprotein complex involved in RNA processing and mRNA degradation.</text>
</comment>
<comment type="subcellular location">
    <subcellularLocation>
        <location evidence="1">Cytoplasm</location>
    </subcellularLocation>
    <subcellularLocation>
        <location evidence="1">Secreted</location>
    </subcellularLocation>
    <subcellularLocation>
        <location evidence="1">Cell surface</location>
    </subcellularLocation>
    <text evidence="1">Fractions of enolase are present in both the cytoplasm and on the cell surface.</text>
</comment>
<comment type="similarity">
    <text evidence="1">Belongs to the enolase family.</text>
</comment>
<reference key="1">
    <citation type="journal article" date="2007" name="Genome Biol.">
        <title>Characterization and modeling of the Haemophilus influenzae core and supragenomes based on the complete genomic sequences of Rd and 12 clinical nontypeable strains.</title>
        <authorList>
            <person name="Hogg J.S."/>
            <person name="Hu F.Z."/>
            <person name="Janto B."/>
            <person name="Boissy R."/>
            <person name="Hayes J."/>
            <person name="Keefe R."/>
            <person name="Post J.C."/>
            <person name="Ehrlich G.D."/>
        </authorList>
    </citation>
    <scope>NUCLEOTIDE SEQUENCE [LARGE SCALE GENOMIC DNA]</scope>
    <source>
        <strain>PittEE</strain>
    </source>
</reference>
<keyword id="KW-0963">Cytoplasm</keyword>
<keyword id="KW-0324">Glycolysis</keyword>
<keyword id="KW-0456">Lyase</keyword>
<keyword id="KW-0460">Magnesium</keyword>
<keyword id="KW-0479">Metal-binding</keyword>
<keyword id="KW-0964">Secreted</keyword>
<proteinExistence type="inferred from homology"/>
<protein>
    <recommendedName>
        <fullName evidence="1">Enolase</fullName>
        <ecNumber evidence="1">4.2.1.11</ecNumber>
    </recommendedName>
    <alternativeName>
        <fullName evidence="1">2-phospho-D-glycerate hydro-lyase</fullName>
    </alternativeName>
    <alternativeName>
        <fullName evidence="1">2-phosphoglycerate dehydratase</fullName>
    </alternativeName>
</protein>
<accession>A5UDD6</accession>
<feature type="chain" id="PRO_1000019210" description="Enolase">
    <location>
        <begin position="1"/>
        <end position="436"/>
    </location>
</feature>
<feature type="active site" description="Proton donor" evidence="1">
    <location>
        <position position="209"/>
    </location>
</feature>
<feature type="active site" description="Proton acceptor" evidence="1">
    <location>
        <position position="343"/>
    </location>
</feature>
<feature type="binding site" evidence="1">
    <location>
        <position position="167"/>
    </location>
    <ligand>
        <name>(2R)-2-phosphoglycerate</name>
        <dbReference type="ChEBI" id="CHEBI:58289"/>
    </ligand>
</feature>
<feature type="binding site" evidence="1">
    <location>
        <position position="246"/>
    </location>
    <ligand>
        <name>Mg(2+)</name>
        <dbReference type="ChEBI" id="CHEBI:18420"/>
    </ligand>
</feature>
<feature type="binding site" evidence="1">
    <location>
        <position position="291"/>
    </location>
    <ligand>
        <name>Mg(2+)</name>
        <dbReference type="ChEBI" id="CHEBI:18420"/>
    </ligand>
</feature>
<feature type="binding site" evidence="1">
    <location>
        <position position="318"/>
    </location>
    <ligand>
        <name>Mg(2+)</name>
        <dbReference type="ChEBI" id="CHEBI:18420"/>
    </ligand>
</feature>
<feature type="binding site" evidence="1">
    <location>
        <position position="343"/>
    </location>
    <ligand>
        <name>(2R)-2-phosphoglycerate</name>
        <dbReference type="ChEBI" id="CHEBI:58289"/>
    </ligand>
</feature>
<feature type="binding site" evidence="1">
    <location>
        <position position="372"/>
    </location>
    <ligand>
        <name>(2R)-2-phosphoglycerate</name>
        <dbReference type="ChEBI" id="CHEBI:58289"/>
    </ligand>
</feature>
<feature type="binding site" evidence="1">
    <location>
        <position position="373"/>
    </location>
    <ligand>
        <name>(2R)-2-phosphoglycerate</name>
        <dbReference type="ChEBI" id="CHEBI:58289"/>
    </ligand>
</feature>
<feature type="binding site" evidence="1">
    <location>
        <position position="394"/>
    </location>
    <ligand>
        <name>(2R)-2-phosphoglycerate</name>
        <dbReference type="ChEBI" id="CHEBI:58289"/>
    </ligand>
</feature>
<evidence type="ECO:0000255" key="1">
    <source>
        <dbReference type="HAMAP-Rule" id="MF_00318"/>
    </source>
</evidence>
<name>ENO_HAEIE</name>
<gene>
    <name evidence="1" type="primary">eno</name>
    <name type="ordered locus">CGSHiEE_07310</name>
</gene>
<sequence>MAKIVKVIGREIIDSRGNPTVEAEVHLEGGFVGLAAAPSGASTGSREALELRDGDKSRFLGKGVLKAVAAVNNEIAQAIVGKDATNQAEIDQIMIDLDGTENKSNFGANAILAVSLANAKAAAASKGLPLYAYIAELNGSAGVYSMPLPMMNIINGGEHADNNVDIQEFMIQPVGAKTLREALRIGAEVFHNLAKVLKAKGMSTAVGDEGGFAPNLASNADALACIKEAVEKAGYVLGKDVTLAMDCASSEFYNKENGMYEMKGEGKSFTSQEFTHYLEELTKQYPIVSIEDGQDESDWEGFAYQTKVLGDRVQLVGDDLFVTNTKILKEGIEKGIANSILIKFNQIGSLTETLAAIKMAKDAGYTAVISHRSGETEDATIADLAVGTAAGQIKTGSMSRSDRIAKYNQLIRIEEALERAGTPAAFPGLKAVKGQA</sequence>
<dbReference type="EC" id="4.2.1.11" evidence="1"/>
<dbReference type="EMBL" id="CP000671">
    <property type="protein sequence ID" value="ABQ98787.1"/>
    <property type="molecule type" value="Genomic_DNA"/>
</dbReference>
<dbReference type="SMR" id="A5UDD6"/>
<dbReference type="KEGG" id="hip:CGSHiEE_07310"/>
<dbReference type="HOGENOM" id="CLU_031223_2_1_6"/>
<dbReference type="UniPathway" id="UPA00109">
    <property type="reaction ID" value="UER00187"/>
</dbReference>
<dbReference type="GO" id="GO:0009986">
    <property type="term" value="C:cell surface"/>
    <property type="evidence" value="ECO:0007669"/>
    <property type="project" value="UniProtKB-SubCell"/>
</dbReference>
<dbReference type="GO" id="GO:0005576">
    <property type="term" value="C:extracellular region"/>
    <property type="evidence" value="ECO:0007669"/>
    <property type="project" value="UniProtKB-SubCell"/>
</dbReference>
<dbReference type="GO" id="GO:0000015">
    <property type="term" value="C:phosphopyruvate hydratase complex"/>
    <property type="evidence" value="ECO:0007669"/>
    <property type="project" value="InterPro"/>
</dbReference>
<dbReference type="GO" id="GO:0000287">
    <property type="term" value="F:magnesium ion binding"/>
    <property type="evidence" value="ECO:0007669"/>
    <property type="project" value="UniProtKB-UniRule"/>
</dbReference>
<dbReference type="GO" id="GO:0004634">
    <property type="term" value="F:phosphopyruvate hydratase activity"/>
    <property type="evidence" value="ECO:0007669"/>
    <property type="project" value="UniProtKB-UniRule"/>
</dbReference>
<dbReference type="GO" id="GO:0006096">
    <property type="term" value="P:glycolytic process"/>
    <property type="evidence" value="ECO:0007669"/>
    <property type="project" value="UniProtKB-UniRule"/>
</dbReference>
<dbReference type="CDD" id="cd03313">
    <property type="entry name" value="enolase"/>
    <property type="match status" value="1"/>
</dbReference>
<dbReference type="FunFam" id="3.20.20.120:FF:000001">
    <property type="entry name" value="Enolase"/>
    <property type="match status" value="1"/>
</dbReference>
<dbReference type="FunFam" id="3.30.390.10:FF:000001">
    <property type="entry name" value="Enolase"/>
    <property type="match status" value="1"/>
</dbReference>
<dbReference type="Gene3D" id="3.20.20.120">
    <property type="entry name" value="Enolase-like C-terminal domain"/>
    <property type="match status" value="1"/>
</dbReference>
<dbReference type="Gene3D" id="3.30.390.10">
    <property type="entry name" value="Enolase-like, N-terminal domain"/>
    <property type="match status" value="1"/>
</dbReference>
<dbReference type="HAMAP" id="MF_00318">
    <property type="entry name" value="Enolase"/>
    <property type="match status" value="1"/>
</dbReference>
<dbReference type="InterPro" id="IPR000941">
    <property type="entry name" value="Enolase"/>
</dbReference>
<dbReference type="InterPro" id="IPR036849">
    <property type="entry name" value="Enolase-like_C_sf"/>
</dbReference>
<dbReference type="InterPro" id="IPR029017">
    <property type="entry name" value="Enolase-like_N"/>
</dbReference>
<dbReference type="InterPro" id="IPR020810">
    <property type="entry name" value="Enolase_C"/>
</dbReference>
<dbReference type="InterPro" id="IPR020809">
    <property type="entry name" value="Enolase_CS"/>
</dbReference>
<dbReference type="InterPro" id="IPR020811">
    <property type="entry name" value="Enolase_N"/>
</dbReference>
<dbReference type="NCBIfam" id="TIGR01060">
    <property type="entry name" value="eno"/>
    <property type="match status" value="1"/>
</dbReference>
<dbReference type="PANTHER" id="PTHR11902">
    <property type="entry name" value="ENOLASE"/>
    <property type="match status" value="1"/>
</dbReference>
<dbReference type="PANTHER" id="PTHR11902:SF1">
    <property type="entry name" value="ENOLASE"/>
    <property type="match status" value="1"/>
</dbReference>
<dbReference type="Pfam" id="PF00113">
    <property type="entry name" value="Enolase_C"/>
    <property type="match status" value="1"/>
</dbReference>
<dbReference type="Pfam" id="PF03952">
    <property type="entry name" value="Enolase_N"/>
    <property type="match status" value="1"/>
</dbReference>
<dbReference type="PIRSF" id="PIRSF001400">
    <property type="entry name" value="Enolase"/>
    <property type="match status" value="1"/>
</dbReference>
<dbReference type="PRINTS" id="PR00148">
    <property type="entry name" value="ENOLASE"/>
</dbReference>
<dbReference type="SFLD" id="SFLDF00002">
    <property type="entry name" value="enolase"/>
    <property type="match status" value="1"/>
</dbReference>
<dbReference type="SFLD" id="SFLDG00178">
    <property type="entry name" value="enolase"/>
    <property type="match status" value="1"/>
</dbReference>
<dbReference type="SMART" id="SM01192">
    <property type="entry name" value="Enolase_C"/>
    <property type="match status" value="1"/>
</dbReference>
<dbReference type="SMART" id="SM01193">
    <property type="entry name" value="Enolase_N"/>
    <property type="match status" value="1"/>
</dbReference>
<dbReference type="SUPFAM" id="SSF51604">
    <property type="entry name" value="Enolase C-terminal domain-like"/>
    <property type="match status" value="1"/>
</dbReference>
<dbReference type="SUPFAM" id="SSF54826">
    <property type="entry name" value="Enolase N-terminal domain-like"/>
    <property type="match status" value="1"/>
</dbReference>
<dbReference type="PROSITE" id="PS00164">
    <property type="entry name" value="ENOLASE"/>
    <property type="match status" value="1"/>
</dbReference>
<organism>
    <name type="scientific">Haemophilus influenzae (strain PittEE)</name>
    <dbReference type="NCBI Taxonomy" id="374930"/>
    <lineage>
        <taxon>Bacteria</taxon>
        <taxon>Pseudomonadati</taxon>
        <taxon>Pseudomonadota</taxon>
        <taxon>Gammaproteobacteria</taxon>
        <taxon>Pasteurellales</taxon>
        <taxon>Pasteurellaceae</taxon>
        <taxon>Haemophilus</taxon>
    </lineage>
</organism>